<name>RS6_PSEP7</name>
<dbReference type="EMBL" id="CP000744">
    <property type="protein sequence ID" value="ABR82707.1"/>
    <property type="molecule type" value="Genomic_DNA"/>
</dbReference>
<dbReference type="RefSeq" id="WP_003095636.1">
    <property type="nucleotide sequence ID" value="NC_009656.1"/>
</dbReference>
<dbReference type="SMR" id="A6VD48"/>
<dbReference type="GeneID" id="77223482"/>
<dbReference type="KEGG" id="pap:PSPA7_5662"/>
<dbReference type="HOGENOM" id="CLU_113441_6_1_6"/>
<dbReference type="Proteomes" id="UP000001582">
    <property type="component" value="Chromosome"/>
</dbReference>
<dbReference type="GO" id="GO:0022627">
    <property type="term" value="C:cytosolic small ribosomal subunit"/>
    <property type="evidence" value="ECO:0007669"/>
    <property type="project" value="TreeGrafter"/>
</dbReference>
<dbReference type="GO" id="GO:0070181">
    <property type="term" value="F:small ribosomal subunit rRNA binding"/>
    <property type="evidence" value="ECO:0007669"/>
    <property type="project" value="TreeGrafter"/>
</dbReference>
<dbReference type="GO" id="GO:0003735">
    <property type="term" value="F:structural constituent of ribosome"/>
    <property type="evidence" value="ECO:0007669"/>
    <property type="project" value="InterPro"/>
</dbReference>
<dbReference type="GO" id="GO:0006412">
    <property type="term" value="P:translation"/>
    <property type="evidence" value="ECO:0007669"/>
    <property type="project" value="UniProtKB-UniRule"/>
</dbReference>
<dbReference type="CDD" id="cd00473">
    <property type="entry name" value="bS6"/>
    <property type="match status" value="1"/>
</dbReference>
<dbReference type="FunFam" id="3.30.70.60:FF:000003">
    <property type="entry name" value="30S ribosomal protein S6"/>
    <property type="match status" value="1"/>
</dbReference>
<dbReference type="Gene3D" id="3.30.70.60">
    <property type="match status" value="1"/>
</dbReference>
<dbReference type="HAMAP" id="MF_00360">
    <property type="entry name" value="Ribosomal_bS6"/>
    <property type="match status" value="1"/>
</dbReference>
<dbReference type="InterPro" id="IPR000529">
    <property type="entry name" value="Ribosomal_bS6"/>
</dbReference>
<dbReference type="InterPro" id="IPR020815">
    <property type="entry name" value="Ribosomal_bS6_CS"/>
</dbReference>
<dbReference type="InterPro" id="IPR035980">
    <property type="entry name" value="Ribosomal_bS6_sf"/>
</dbReference>
<dbReference type="InterPro" id="IPR020814">
    <property type="entry name" value="Ribosomal_S6_plastid/chlpt"/>
</dbReference>
<dbReference type="InterPro" id="IPR014717">
    <property type="entry name" value="Transl_elong_EF1B/ribsomal_bS6"/>
</dbReference>
<dbReference type="NCBIfam" id="TIGR00166">
    <property type="entry name" value="S6"/>
    <property type="match status" value="1"/>
</dbReference>
<dbReference type="PANTHER" id="PTHR21011">
    <property type="entry name" value="MITOCHONDRIAL 28S RIBOSOMAL PROTEIN S6"/>
    <property type="match status" value="1"/>
</dbReference>
<dbReference type="PANTHER" id="PTHR21011:SF1">
    <property type="entry name" value="SMALL RIBOSOMAL SUBUNIT PROTEIN BS6M"/>
    <property type="match status" value="1"/>
</dbReference>
<dbReference type="Pfam" id="PF01250">
    <property type="entry name" value="Ribosomal_S6"/>
    <property type="match status" value="1"/>
</dbReference>
<dbReference type="SUPFAM" id="SSF54995">
    <property type="entry name" value="Ribosomal protein S6"/>
    <property type="match status" value="1"/>
</dbReference>
<dbReference type="PROSITE" id="PS01048">
    <property type="entry name" value="RIBOSOMAL_S6"/>
    <property type="match status" value="1"/>
</dbReference>
<accession>A6VD48</accession>
<organism>
    <name type="scientific">Pseudomonas paraeruginosa (strain DSM 24068 / PA7)</name>
    <name type="common">Pseudomonas aeruginosa (strain PA7)</name>
    <dbReference type="NCBI Taxonomy" id="381754"/>
    <lineage>
        <taxon>Bacteria</taxon>
        <taxon>Pseudomonadati</taxon>
        <taxon>Pseudomonadota</taxon>
        <taxon>Gammaproteobacteria</taxon>
        <taxon>Pseudomonadales</taxon>
        <taxon>Pseudomonadaceae</taxon>
        <taxon>Pseudomonas</taxon>
        <taxon>Pseudomonas paraeruginosa</taxon>
    </lineage>
</organism>
<protein>
    <recommendedName>
        <fullName evidence="1">Small ribosomal subunit protein bS6</fullName>
    </recommendedName>
    <alternativeName>
        <fullName evidence="3">30S ribosomal protein S6</fullName>
    </alternativeName>
</protein>
<comment type="function">
    <text evidence="1">Binds together with bS18 to 16S ribosomal RNA.</text>
</comment>
<comment type="similarity">
    <text evidence="1">Belongs to the bacterial ribosomal protein bS6 family.</text>
</comment>
<proteinExistence type="inferred from homology"/>
<gene>
    <name evidence="1" type="primary">rpsF</name>
    <name type="ordered locus">PSPA7_5662</name>
</gene>
<evidence type="ECO:0000255" key="1">
    <source>
        <dbReference type="HAMAP-Rule" id="MF_00360"/>
    </source>
</evidence>
<evidence type="ECO:0000256" key="2">
    <source>
        <dbReference type="SAM" id="MobiDB-lite"/>
    </source>
</evidence>
<evidence type="ECO:0000305" key="3"/>
<reference key="1">
    <citation type="submission" date="2007-06" db="EMBL/GenBank/DDBJ databases">
        <authorList>
            <person name="Dodson R.J."/>
            <person name="Harkins D."/>
            <person name="Paulsen I.T."/>
        </authorList>
    </citation>
    <scope>NUCLEOTIDE SEQUENCE [LARGE SCALE GENOMIC DNA]</scope>
    <source>
        <strain>DSM 24068 / PA7</strain>
    </source>
</reference>
<sequence>MRHYEIVFLVHPDQSEQVGGMVERYTKAIEEDGGKIHRLEDWGRRQLAYAINNVHKAHYVLMNVECSAKALAELEDNFRYNDAVIRNLVMRRDEAVTEQSEMLKAEESRNERRERRERPNDNAEGADGDDNSDSDNADE</sequence>
<feature type="chain" id="PRO_1000005316" description="Small ribosomal subunit protein bS6">
    <location>
        <begin position="1"/>
        <end position="139"/>
    </location>
</feature>
<feature type="region of interest" description="Disordered" evidence="2">
    <location>
        <begin position="95"/>
        <end position="139"/>
    </location>
</feature>
<feature type="compositionally biased region" description="Basic and acidic residues" evidence="2">
    <location>
        <begin position="95"/>
        <end position="121"/>
    </location>
</feature>
<feature type="compositionally biased region" description="Acidic residues" evidence="2">
    <location>
        <begin position="124"/>
        <end position="139"/>
    </location>
</feature>
<keyword id="KW-0687">Ribonucleoprotein</keyword>
<keyword id="KW-0689">Ribosomal protein</keyword>
<keyword id="KW-0694">RNA-binding</keyword>
<keyword id="KW-0699">rRNA-binding</keyword>